<keyword id="KW-0028">Amino-acid biosynthesis</keyword>
<keyword id="KW-0057">Aromatic amino acid biosynthesis</keyword>
<keyword id="KW-0456">Lyase</keyword>
<reference key="1">
    <citation type="journal article" date="2005" name="Proc. Natl. Acad. Sci. U.S.A.">
        <title>The psychrophilic lifestyle as revealed by the genome sequence of Colwellia psychrerythraea 34H through genomic and proteomic analyses.</title>
        <authorList>
            <person name="Methe B.A."/>
            <person name="Nelson K.E."/>
            <person name="Deming J.W."/>
            <person name="Momen B."/>
            <person name="Melamud E."/>
            <person name="Zhang X."/>
            <person name="Moult J."/>
            <person name="Madupu R."/>
            <person name="Nelson W.C."/>
            <person name="Dodson R.J."/>
            <person name="Brinkac L.M."/>
            <person name="Daugherty S.C."/>
            <person name="Durkin A.S."/>
            <person name="DeBoy R.T."/>
            <person name="Kolonay J.F."/>
            <person name="Sullivan S.A."/>
            <person name="Zhou L."/>
            <person name="Davidsen T.M."/>
            <person name="Wu M."/>
            <person name="Huston A.L."/>
            <person name="Lewis M."/>
            <person name="Weaver B."/>
            <person name="Weidman J.F."/>
            <person name="Khouri H."/>
            <person name="Utterback T.R."/>
            <person name="Feldblyum T.V."/>
            <person name="Fraser C.M."/>
        </authorList>
    </citation>
    <scope>NUCLEOTIDE SEQUENCE [LARGE SCALE GENOMIC DNA]</scope>
    <source>
        <strain>34H / ATCC BAA-681</strain>
    </source>
</reference>
<evidence type="ECO:0000255" key="1">
    <source>
        <dbReference type="HAMAP-Rule" id="MF_00169"/>
    </source>
</evidence>
<proteinExistence type="inferred from homology"/>
<dbReference type="EC" id="4.2.1.10" evidence="1"/>
<dbReference type="EMBL" id="CP000083">
    <property type="protein sequence ID" value="AAZ27589.1"/>
    <property type="molecule type" value="Genomic_DNA"/>
</dbReference>
<dbReference type="RefSeq" id="WP_011041791.1">
    <property type="nucleotide sequence ID" value="NC_003910.7"/>
</dbReference>
<dbReference type="SMR" id="Q487R8"/>
<dbReference type="STRING" id="167879.CPS_0948"/>
<dbReference type="KEGG" id="cps:CPS_0948"/>
<dbReference type="HOGENOM" id="CLU_090968_1_0_6"/>
<dbReference type="UniPathway" id="UPA00053">
    <property type="reaction ID" value="UER00086"/>
</dbReference>
<dbReference type="Proteomes" id="UP000000547">
    <property type="component" value="Chromosome"/>
</dbReference>
<dbReference type="GO" id="GO:0003855">
    <property type="term" value="F:3-dehydroquinate dehydratase activity"/>
    <property type="evidence" value="ECO:0007669"/>
    <property type="project" value="UniProtKB-UniRule"/>
</dbReference>
<dbReference type="GO" id="GO:0008652">
    <property type="term" value="P:amino acid biosynthetic process"/>
    <property type="evidence" value="ECO:0007669"/>
    <property type="project" value="UniProtKB-KW"/>
</dbReference>
<dbReference type="GO" id="GO:0009073">
    <property type="term" value="P:aromatic amino acid family biosynthetic process"/>
    <property type="evidence" value="ECO:0007669"/>
    <property type="project" value="UniProtKB-KW"/>
</dbReference>
<dbReference type="GO" id="GO:0009423">
    <property type="term" value="P:chorismate biosynthetic process"/>
    <property type="evidence" value="ECO:0007669"/>
    <property type="project" value="UniProtKB-UniRule"/>
</dbReference>
<dbReference type="GO" id="GO:0019631">
    <property type="term" value="P:quinate catabolic process"/>
    <property type="evidence" value="ECO:0007669"/>
    <property type="project" value="TreeGrafter"/>
</dbReference>
<dbReference type="CDD" id="cd00466">
    <property type="entry name" value="DHQase_II"/>
    <property type="match status" value="1"/>
</dbReference>
<dbReference type="Gene3D" id="3.40.50.9100">
    <property type="entry name" value="Dehydroquinase, class II"/>
    <property type="match status" value="1"/>
</dbReference>
<dbReference type="HAMAP" id="MF_00169">
    <property type="entry name" value="AroQ"/>
    <property type="match status" value="1"/>
</dbReference>
<dbReference type="InterPro" id="IPR001874">
    <property type="entry name" value="DHquinase_II"/>
</dbReference>
<dbReference type="InterPro" id="IPR018509">
    <property type="entry name" value="DHquinase_II_CS"/>
</dbReference>
<dbReference type="InterPro" id="IPR036441">
    <property type="entry name" value="DHquinase_II_sf"/>
</dbReference>
<dbReference type="NCBIfam" id="TIGR01088">
    <property type="entry name" value="aroQ"/>
    <property type="match status" value="1"/>
</dbReference>
<dbReference type="NCBIfam" id="NF003804">
    <property type="entry name" value="PRK05395.1-1"/>
    <property type="match status" value="1"/>
</dbReference>
<dbReference type="NCBIfam" id="NF003805">
    <property type="entry name" value="PRK05395.1-2"/>
    <property type="match status" value="1"/>
</dbReference>
<dbReference type="NCBIfam" id="NF003806">
    <property type="entry name" value="PRK05395.1-3"/>
    <property type="match status" value="1"/>
</dbReference>
<dbReference type="NCBIfam" id="NF003807">
    <property type="entry name" value="PRK05395.1-4"/>
    <property type="match status" value="1"/>
</dbReference>
<dbReference type="PANTHER" id="PTHR21272">
    <property type="entry name" value="CATABOLIC 3-DEHYDROQUINASE"/>
    <property type="match status" value="1"/>
</dbReference>
<dbReference type="PANTHER" id="PTHR21272:SF3">
    <property type="entry name" value="CATABOLIC 3-DEHYDROQUINASE"/>
    <property type="match status" value="1"/>
</dbReference>
<dbReference type="Pfam" id="PF01220">
    <property type="entry name" value="DHquinase_II"/>
    <property type="match status" value="1"/>
</dbReference>
<dbReference type="PIRSF" id="PIRSF001399">
    <property type="entry name" value="DHquinase_II"/>
    <property type="match status" value="1"/>
</dbReference>
<dbReference type="SUPFAM" id="SSF52304">
    <property type="entry name" value="Type II 3-dehydroquinate dehydratase"/>
    <property type="match status" value="1"/>
</dbReference>
<dbReference type="PROSITE" id="PS01029">
    <property type="entry name" value="DEHYDROQUINASE_II"/>
    <property type="match status" value="1"/>
</dbReference>
<organism>
    <name type="scientific">Colwellia psychrerythraea (strain 34H / ATCC BAA-681)</name>
    <name type="common">Vibrio psychroerythus</name>
    <dbReference type="NCBI Taxonomy" id="167879"/>
    <lineage>
        <taxon>Bacteria</taxon>
        <taxon>Pseudomonadati</taxon>
        <taxon>Pseudomonadota</taxon>
        <taxon>Gammaproteobacteria</taxon>
        <taxon>Alteromonadales</taxon>
        <taxon>Colwelliaceae</taxon>
        <taxon>Colwellia</taxon>
    </lineage>
</organism>
<feature type="chain" id="PRO_1000023464" description="3-dehydroquinate dehydratase">
    <location>
        <begin position="1"/>
        <end position="153"/>
    </location>
</feature>
<feature type="active site" description="Proton acceptor" evidence="1">
    <location>
        <position position="26"/>
    </location>
</feature>
<feature type="active site" description="Proton donor" evidence="1">
    <location>
        <position position="103"/>
    </location>
</feature>
<feature type="binding site" evidence="1">
    <location>
        <position position="77"/>
    </location>
    <ligand>
        <name>substrate</name>
    </ligand>
</feature>
<feature type="binding site" evidence="1">
    <location>
        <position position="83"/>
    </location>
    <ligand>
        <name>substrate</name>
    </ligand>
</feature>
<feature type="binding site" evidence="1">
    <location>
        <position position="90"/>
    </location>
    <ligand>
        <name>substrate</name>
    </ligand>
</feature>
<feature type="binding site" evidence="1">
    <location>
        <begin position="104"/>
        <end position="105"/>
    </location>
    <ligand>
        <name>substrate</name>
    </ligand>
</feature>
<feature type="binding site" evidence="1">
    <location>
        <position position="114"/>
    </location>
    <ligand>
        <name>substrate</name>
    </ligand>
</feature>
<feature type="site" description="Transition state stabilizer" evidence="1">
    <location>
        <position position="21"/>
    </location>
</feature>
<sequence>MTAKFTVLVLNGPNLNMLGKREPTIYGNQGLSEIIADLGLQADQKNIVLKHLQSNAEHELVDAIHNGYQQVDFIIINPAAFTHTSVAIRDALLSVAIPFIEVHLSNVHAREAFRKHSYLSDIATGVICGFGAQGYSFALDAAYTYLNKAQVDK</sequence>
<protein>
    <recommendedName>
        <fullName evidence="1">3-dehydroquinate dehydratase</fullName>
        <shortName evidence="1">3-dehydroquinase</shortName>
        <ecNumber evidence="1">4.2.1.10</ecNumber>
    </recommendedName>
    <alternativeName>
        <fullName evidence="1">Type II DHQase</fullName>
    </alternativeName>
</protein>
<gene>
    <name evidence="1" type="primary">aroQ</name>
    <name type="ordered locus">CPS_0948</name>
</gene>
<name>AROQ_COLP3</name>
<accession>Q487R8</accession>
<comment type="function">
    <text evidence="1">Catalyzes a trans-dehydration via an enolate intermediate.</text>
</comment>
<comment type="catalytic activity">
    <reaction evidence="1">
        <text>3-dehydroquinate = 3-dehydroshikimate + H2O</text>
        <dbReference type="Rhea" id="RHEA:21096"/>
        <dbReference type="ChEBI" id="CHEBI:15377"/>
        <dbReference type="ChEBI" id="CHEBI:16630"/>
        <dbReference type="ChEBI" id="CHEBI:32364"/>
        <dbReference type="EC" id="4.2.1.10"/>
    </reaction>
</comment>
<comment type="pathway">
    <text evidence="1">Metabolic intermediate biosynthesis; chorismate biosynthesis; chorismate from D-erythrose 4-phosphate and phosphoenolpyruvate: step 3/7.</text>
</comment>
<comment type="subunit">
    <text evidence="1">Homododecamer.</text>
</comment>
<comment type="similarity">
    <text evidence="1">Belongs to the type-II 3-dehydroquinase family.</text>
</comment>